<dbReference type="EMBL" id="AF394194">
    <property type="protein sequence ID" value="AAK73822.1"/>
    <property type="molecule type" value="mRNA"/>
</dbReference>
<dbReference type="RefSeq" id="NP_001009839.1">
    <property type="nucleotide sequence ID" value="NM_001009839.1"/>
</dbReference>
<dbReference type="SMR" id="Q95L97"/>
<dbReference type="STRING" id="9685.ENSFCAP00000031714"/>
<dbReference type="GlyCosmos" id="Q95L97">
    <property type="glycosylation" value="1 site, No reported glycans"/>
</dbReference>
<dbReference type="PaxDb" id="9685-ENSFCAP00000009354"/>
<dbReference type="GeneID" id="493788"/>
<dbReference type="KEGG" id="fca:493788"/>
<dbReference type="CTD" id="6575"/>
<dbReference type="eggNOG" id="KOG2493">
    <property type="taxonomic scope" value="Eukaryota"/>
</dbReference>
<dbReference type="InParanoid" id="Q95L97"/>
<dbReference type="OrthoDB" id="260807at2759"/>
<dbReference type="TreeFam" id="TF314426"/>
<dbReference type="Proteomes" id="UP000011712">
    <property type="component" value="Unplaced"/>
</dbReference>
<dbReference type="GO" id="GO:0016324">
    <property type="term" value="C:apical plasma membrane"/>
    <property type="evidence" value="ECO:0000250"/>
    <property type="project" value="UniProtKB"/>
</dbReference>
<dbReference type="GO" id="GO:0031526">
    <property type="term" value="C:brush border membrane"/>
    <property type="evidence" value="ECO:0000250"/>
    <property type="project" value="UniProtKB"/>
</dbReference>
<dbReference type="GO" id="GO:0005886">
    <property type="term" value="C:plasma membrane"/>
    <property type="evidence" value="ECO:0000250"/>
    <property type="project" value="UniProtKB"/>
</dbReference>
<dbReference type="GO" id="GO:0005315">
    <property type="term" value="F:phosphate transmembrane transporter activity"/>
    <property type="evidence" value="ECO:0000318"/>
    <property type="project" value="GO_Central"/>
</dbReference>
<dbReference type="GO" id="GO:0005436">
    <property type="term" value="F:sodium:phosphate symporter activity"/>
    <property type="evidence" value="ECO:0000250"/>
    <property type="project" value="UniProtKB"/>
</dbReference>
<dbReference type="GO" id="GO:0001618">
    <property type="term" value="F:virus receptor activity"/>
    <property type="evidence" value="ECO:0007669"/>
    <property type="project" value="UniProtKB-KW"/>
</dbReference>
<dbReference type="GO" id="GO:0035435">
    <property type="term" value="P:phosphate ion transmembrane transport"/>
    <property type="evidence" value="ECO:0000318"/>
    <property type="project" value="GO_Central"/>
</dbReference>
<dbReference type="GO" id="GO:0030501">
    <property type="term" value="P:positive regulation of bone mineralization"/>
    <property type="evidence" value="ECO:0000250"/>
    <property type="project" value="UniProtKB"/>
</dbReference>
<dbReference type="InterPro" id="IPR001204">
    <property type="entry name" value="Phos_transporter"/>
</dbReference>
<dbReference type="PANTHER" id="PTHR11101">
    <property type="entry name" value="PHOSPHATE TRANSPORTER"/>
    <property type="match status" value="1"/>
</dbReference>
<dbReference type="PANTHER" id="PTHR11101:SF83">
    <property type="entry name" value="SODIUM-DEPENDENT PHOSPHATE TRANSPORTER 2"/>
    <property type="match status" value="1"/>
</dbReference>
<dbReference type="Pfam" id="PF01384">
    <property type="entry name" value="PHO4"/>
    <property type="match status" value="1"/>
</dbReference>
<comment type="function">
    <text evidence="1">Sodium-phosphate symporter which preferentially transports the monovalent form of phosphate with a stoichiometry of two sodium ions per phosphate ion. Plays a critical role in the determination of bone quality and strength by providing phosphate for bone mineralization. Required to maintain normal cerebrospinal fluid phosphate levels. Mediates phosphate-induced calcification of vascular smooth muscle cells (VCMCs) and can functionally compensate for loss of SLC20A1 in VCMCs (By similarity).</text>
</comment>
<comment type="function">
    <text evidence="5">(Microbial infection) Functions as a retroviral receptor for feline leukemia virus subgroup B (FeLV-B).</text>
</comment>
<comment type="catalytic activity">
    <reaction evidence="1">
        <text>2 Na(+)(out) + phosphate(out) = 2 Na(+)(in) + phosphate(in)</text>
        <dbReference type="Rhea" id="RHEA:71259"/>
        <dbReference type="ChEBI" id="CHEBI:29101"/>
        <dbReference type="ChEBI" id="CHEBI:43474"/>
    </reaction>
</comment>
<comment type="subunit">
    <text evidence="1">Homodimer.</text>
</comment>
<comment type="subcellular location">
    <subcellularLocation>
        <location evidence="2">Cell membrane</location>
        <topology evidence="3">Multi-pass membrane protein</topology>
    </subcellularLocation>
    <subcellularLocation>
        <location evidence="2">Apical cell membrane</location>
        <topology evidence="3">Multi-pass membrane protein</topology>
    </subcellularLocation>
</comment>
<comment type="similarity">
    <text evidence="6">Belongs to the inorganic phosphate transporter (PiT) (TC 2.A.20) family.</text>
</comment>
<organism>
    <name type="scientific">Felis catus</name>
    <name type="common">Cat</name>
    <name type="synonym">Felis silvestris catus</name>
    <dbReference type="NCBI Taxonomy" id="9685"/>
    <lineage>
        <taxon>Eukaryota</taxon>
        <taxon>Metazoa</taxon>
        <taxon>Chordata</taxon>
        <taxon>Craniata</taxon>
        <taxon>Vertebrata</taxon>
        <taxon>Euteleostomi</taxon>
        <taxon>Mammalia</taxon>
        <taxon>Eutheria</taxon>
        <taxon>Laurasiatheria</taxon>
        <taxon>Carnivora</taxon>
        <taxon>Feliformia</taxon>
        <taxon>Felidae</taxon>
        <taxon>Felinae</taxon>
        <taxon>Felis</taxon>
    </lineage>
</organism>
<sequence length="653" mass="70492">MAIDGYLWMVILGFIIAFILAFSVGANDVANSFGTAVGSGVVTLRQACILASIFETTGSVLLGAKVGETIRKGIIDVNLYNETVETLMAGEVSAMVGSAVWQLIASFLRLPISGTHCIVGSTIGFSLVAIGTQGVQWMELVKIVASWFISPLLSGFMSGVLFILIRIFILKKEDPVPNGLRALPVFYAATIAINVFSIMYTGAPVLGLVLPIWAIALISFGVALLFALFVWLFVCPWMRRKIAGKLQKEAALSRVSDESLSKIQEVESPVFKELPGAKANDDSTVPLTGSAGEPSGTSEGTSVGNHPRASYGRALSMTHGSAKSPVSNGTFGFDGHTRSDGHVYHTVHKDSGLYKDLLHRIHSDRGPEERPAQENNYRFLRRNNSYTCYTAAICGMPVHSTFKAADSSSAPEDSEKLVGDAVSYSKKRLRYDSYSSYCNAVAEAEIEADEGGVEMKLASELTDPDQPRDDPAEEEKEEKDTAEVHLLFHFLQVLTACFGSFAHGGNDVSNAIGPLVALWLIYEQGAVLQEAVTPVWLLFYGGVGICTGLWVWGRRVIQTMGKDLTPITPSSGFTIELASAFTVVIASNVGLPVSTTHCKVGSVVAVGWIRSRKAVDWRLFRNIFVAWFVTVPVAGLFSAAIMALLMYGILPYV</sequence>
<evidence type="ECO:0000250" key="1">
    <source>
        <dbReference type="UniProtKB" id="Q08357"/>
    </source>
</evidence>
<evidence type="ECO:0000250" key="2">
    <source>
        <dbReference type="UniProtKB" id="Q63488"/>
    </source>
</evidence>
<evidence type="ECO:0000255" key="3"/>
<evidence type="ECO:0000256" key="4">
    <source>
        <dbReference type="SAM" id="MobiDB-lite"/>
    </source>
</evidence>
<evidence type="ECO:0000269" key="5">
    <source>
    </source>
</evidence>
<evidence type="ECO:0000305" key="6"/>
<keyword id="KW-1003">Cell membrane</keyword>
<keyword id="KW-0325">Glycoprotein</keyword>
<keyword id="KW-1183">Host cell receptor for virus entry</keyword>
<keyword id="KW-0945">Host-virus interaction</keyword>
<keyword id="KW-0406">Ion transport</keyword>
<keyword id="KW-0472">Membrane</keyword>
<keyword id="KW-0592">Phosphate transport</keyword>
<keyword id="KW-0597">Phosphoprotein</keyword>
<keyword id="KW-0675">Receptor</keyword>
<keyword id="KW-1185">Reference proteome</keyword>
<keyword id="KW-0915">Sodium</keyword>
<keyword id="KW-0739">Sodium transport</keyword>
<keyword id="KW-0769">Symport</keyword>
<keyword id="KW-0812">Transmembrane</keyword>
<keyword id="KW-1133">Transmembrane helix</keyword>
<keyword id="KW-0813">Transport</keyword>
<proteinExistence type="evidence at protein level"/>
<accession>Q95L97</accession>
<feature type="chain" id="PRO_0000341267" description="Sodium-dependent phosphate transporter 2">
    <location>
        <begin position="1"/>
        <end position="653"/>
    </location>
</feature>
<feature type="topological domain" description="Extracellular" evidence="3">
    <location>
        <begin position="1"/>
        <end position="5"/>
    </location>
</feature>
<feature type="transmembrane region" description="Helical" evidence="3">
    <location>
        <begin position="6"/>
        <end position="26"/>
    </location>
</feature>
<feature type="topological domain" description="Cytoplasmic" evidence="3">
    <location>
        <begin position="27"/>
        <end position="46"/>
    </location>
</feature>
<feature type="transmembrane region" description="Helical" evidence="3">
    <location>
        <begin position="47"/>
        <end position="67"/>
    </location>
</feature>
<feature type="topological domain" description="Extracellular" evidence="3">
    <location>
        <begin position="68"/>
        <end position="86"/>
    </location>
</feature>
<feature type="transmembrane region" description="Helical" evidence="3">
    <location>
        <begin position="87"/>
        <end position="107"/>
    </location>
</feature>
<feature type="topological domain" description="Cytoplasmic" evidence="3">
    <location>
        <begin position="108"/>
        <end position="109"/>
    </location>
</feature>
<feature type="transmembrane region" description="Helical" evidence="3">
    <location>
        <begin position="110"/>
        <end position="130"/>
    </location>
</feature>
<feature type="topological domain" description="Extracellular" evidence="3">
    <location>
        <begin position="131"/>
        <end position="142"/>
    </location>
</feature>
<feature type="transmembrane region" description="Helical" evidence="3">
    <location>
        <begin position="143"/>
        <end position="163"/>
    </location>
</feature>
<feature type="topological domain" description="Cytoplasmic" evidence="3">
    <location>
        <begin position="164"/>
        <end position="190"/>
    </location>
</feature>
<feature type="transmembrane region" description="Helical" evidence="3">
    <location>
        <begin position="191"/>
        <end position="211"/>
    </location>
</feature>
<feature type="topological domain" description="Extracellular" evidence="3">
    <location>
        <begin position="212"/>
        <end position="213"/>
    </location>
</feature>
<feature type="transmembrane region" description="Helical" evidence="3">
    <location>
        <begin position="214"/>
        <end position="234"/>
    </location>
</feature>
<feature type="topological domain" description="Cytoplasmic" evidence="3">
    <location>
        <begin position="235"/>
        <end position="483"/>
    </location>
</feature>
<feature type="transmembrane region" description="Helical" evidence="3">
    <location>
        <begin position="484"/>
        <end position="504"/>
    </location>
</feature>
<feature type="topological domain" description="Extracellular" evidence="3">
    <location>
        <begin position="505"/>
        <end position="531"/>
    </location>
</feature>
<feature type="transmembrane region" description="Helical" evidence="3">
    <location>
        <begin position="532"/>
        <end position="552"/>
    </location>
</feature>
<feature type="topological domain" description="Cytoplasmic" evidence="3">
    <location>
        <begin position="553"/>
        <end position="572"/>
    </location>
</feature>
<feature type="transmembrane region" description="Helical" evidence="3">
    <location>
        <begin position="573"/>
        <end position="587"/>
    </location>
</feature>
<feature type="topological domain" description="Extracellular" evidence="3">
    <location>
        <begin position="588"/>
        <end position="594"/>
    </location>
</feature>
<feature type="transmembrane region" description="Helical" evidence="3">
    <location>
        <begin position="595"/>
        <end position="610"/>
    </location>
</feature>
<feature type="topological domain" description="Cytoplasmic" evidence="3">
    <location>
        <begin position="611"/>
        <end position="622"/>
    </location>
</feature>
<feature type="transmembrane region" description="Helical" evidence="3">
    <location>
        <begin position="623"/>
        <end position="643"/>
    </location>
</feature>
<feature type="topological domain" description="Extracellular" evidence="3">
    <location>
        <begin position="644"/>
        <end position="653"/>
    </location>
</feature>
<feature type="region of interest" description="Disordered" evidence="4">
    <location>
        <begin position="275"/>
        <end position="311"/>
    </location>
</feature>
<feature type="region of interest" description="Disordered" evidence="4">
    <location>
        <begin position="459"/>
        <end position="478"/>
    </location>
</feature>
<feature type="compositionally biased region" description="Polar residues" evidence="4">
    <location>
        <begin position="295"/>
        <end position="304"/>
    </location>
</feature>
<feature type="modified residue" description="Phosphoserine" evidence="2">
    <location>
        <position position="253"/>
    </location>
</feature>
<feature type="modified residue" description="Phosphoserine" evidence="1">
    <location>
        <position position="256"/>
    </location>
</feature>
<feature type="modified residue" description="Phosphoserine" evidence="1">
    <location>
        <position position="259"/>
    </location>
</feature>
<feature type="modified residue" description="Phosphoserine" evidence="1">
    <location>
        <position position="268"/>
    </location>
</feature>
<feature type="modified residue" description="Phosphoserine" evidence="1">
    <location>
        <position position="316"/>
    </location>
</feature>
<feature type="modified residue" description="Phosphoserine" evidence="1">
    <location>
        <position position="385"/>
    </location>
</feature>
<feature type="glycosylation site" description="N-linked (GlcNAc...) asparagine" evidence="3">
    <location>
        <position position="81"/>
    </location>
</feature>
<gene>
    <name type="primary">SLC20A2</name>
    <name type="synonym">PIT2</name>
</gene>
<protein>
    <recommendedName>
        <fullName>Sodium-dependent phosphate transporter 2</fullName>
    </recommendedName>
    <alternativeName>
        <fullName>Phosphate transporter 2</fullName>
        <shortName>FePit2</shortName>
        <shortName>PiT-2</shortName>
    </alternativeName>
    <alternativeName>
        <fullName>Solute carrier family 20 member 2</fullName>
    </alternativeName>
</protein>
<reference key="1">
    <citation type="journal article" date="2001" name="J. Virol.">
        <title>Feline Pit2 functions as a receptor for subgroup B feline leukemia viruses.</title>
        <authorList>
            <person name="Anderson M.M."/>
            <person name="Lauring A.S."/>
            <person name="Robertson S."/>
            <person name="Dirks C."/>
            <person name="Overbaugh J."/>
        </authorList>
    </citation>
    <scope>NUCLEOTIDE SEQUENCE [MRNA]</scope>
    <scope>FUNCTION AS RETROVIRAL RECEPTOR (MICROBIAL FUNCTION)</scope>
</reference>
<name>S20A2_FELCA</name>